<sequence length="215" mass="22221">MESSRGKPGLNGSGGGAAAFDYSSRRGYYTGAGAALPPLAAGSRAPPVDPCCVALRVFVLLGTLASAVVMAADRQSTTVQIAAGEQLAPPLRVPVTAKWTYSSAFVYFVVANAMVFAFSAAALAAVRRRSAVVPVMVGDLVAMALLFSAVGAAAQFGLLGERGNAHVRWAKVCDVYGPFCERAMAAVVVALIAAFADLVLLMLTILTIHKASSYY</sequence>
<name>CSPLB_ORYSI</name>
<proteinExistence type="evidence at transcript level"/>
<evidence type="ECO:0000250" key="1"/>
<evidence type="ECO:0000255" key="2"/>
<evidence type="ECO:0000305" key="3"/>
<feature type="chain" id="PRO_0000412027" description="CASP-like protein 1E1">
    <location>
        <begin position="1"/>
        <end position="215"/>
    </location>
</feature>
<feature type="topological domain" description="Cytoplasmic" evidence="2">
    <location>
        <begin position="1"/>
        <end position="51"/>
    </location>
</feature>
<feature type="transmembrane region" description="Helical" evidence="2">
    <location>
        <begin position="52"/>
        <end position="72"/>
    </location>
</feature>
<feature type="topological domain" description="Extracellular" evidence="2">
    <location>
        <begin position="73"/>
        <end position="103"/>
    </location>
</feature>
<feature type="transmembrane region" description="Helical" evidence="2">
    <location>
        <begin position="104"/>
        <end position="124"/>
    </location>
</feature>
<feature type="topological domain" description="Cytoplasmic" evidence="2">
    <location>
        <begin position="125"/>
        <end position="130"/>
    </location>
</feature>
<feature type="transmembrane region" description="Helical" evidence="2">
    <location>
        <begin position="131"/>
        <end position="151"/>
    </location>
</feature>
<feature type="topological domain" description="Extracellular" evidence="2">
    <location>
        <begin position="152"/>
        <end position="185"/>
    </location>
</feature>
<feature type="transmembrane region" description="Helical" evidence="2">
    <location>
        <begin position="186"/>
        <end position="206"/>
    </location>
</feature>
<feature type="topological domain" description="Cytoplasmic" evidence="2">
    <location>
        <begin position="207"/>
        <end position="215"/>
    </location>
</feature>
<feature type="sequence conflict" description="In Ref. 2; CT847720." evidence="3" ref="2">
    <original>Q</original>
    <variation>E</variation>
    <location>
        <position position="86"/>
    </location>
</feature>
<feature type="sequence conflict" description="In Ref. 2; CT847720." evidence="3" ref="2">
    <original>F</original>
    <variation>L</variation>
    <location>
        <position position="118"/>
    </location>
</feature>
<keyword id="KW-1003">Cell membrane</keyword>
<keyword id="KW-0472">Membrane</keyword>
<keyword id="KW-1185">Reference proteome</keyword>
<keyword id="KW-0812">Transmembrane</keyword>
<keyword id="KW-1133">Transmembrane helix</keyword>
<dbReference type="EMBL" id="CM000126">
    <property type="protein sequence ID" value="EEC70640.1"/>
    <property type="molecule type" value="Genomic_DNA"/>
</dbReference>
<dbReference type="EMBL" id="CT847720">
    <property type="status" value="NOT_ANNOTATED_CDS"/>
    <property type="molecule type" value="mRNA"/>
</dbReference>
<dbReference type="STRING" id="39946.B8A7Z5"/>
<dbReference type="EnsemblPlants" id="BGIOSGA003513-TA">
    <property type="protein sequence ID" value="BGIOSGA003513-PA"/>
    <property type="gene ID" value="BGIOSGA003513"/>
</dbReference>
<dbReference type="Gramene" id="BGIOSGA003513-TA">
    <property type="protein sequence ID" value="BGIOSGA003513-PA"/>
    <property type="gene ID" value="BGIOSGA003513"/>
</dbReference>
<dbReference type="HOGENOM" id="CLU_066104_1_1_1"/>
<dbReference type="OMA" id="FCHQVAA"/>
<dbReference type="Proteomes" id="UP000007015">
    <property type="component" value="Chromosome 1"/>
</dbReference>
<dbReference type="GO" id="GO:0005886">
    <property type="term" value="C:plasma membrane"/>
    <property type="evidence" value="ECO:0007669"/>
    <property type="project" value="UniProtKB-SubCell"/>
</dbReference>
<dbReference type="InterPro" id="IPR006459">
    <property type="entry name" value="CASP/CASPL"/>
</dbReference>
<dbReference type="InterPro" id="IPR006702">
    <property type="entry name" value="CASP_dom"/>
</dbReference>
<dbReference type="InterPro" id="IPR044173">
    <property type="entry name" value="CASPL"/>
</dbReference>
<dbReference type="NCBIfam" id="TIGR01569">
    <property type="entry name" value="A_tha_TIGR01569"/>
    <property type="match status" value="1"/>
</dbReference>
<dbReference type="PANTHER" id="PTHR36488">
    <property type="entry name" value="CASP-LIKE PROTEIN 1U1"/>
    <property type="match status" value="1"/>
</dbReference>
<dbReference type="PANTHER" id="PTHR36488:SF8">
    <property type="entry name" value="CASP-LIKE PROTEIN 1U1"/>
    <property type="match status" value="1"/>
</dbReference>
<dbReference type="Pfam" id="PF04535">
    <property type="entry name" value="CASP_dom"/>
    <property type="match status" value="1"/>
</dbReference>
<accession>B8A7Z5</accession>
<comment type="subunit">
    <text evidence="1">Homodimer and heterodimers.</text>
</comment>
<comment type="subcellular location">
    <subcellularLocation>
        <location evidence="1">Cell membrane</location>
        <topology evidence="1">Multi-pass membrane protein</topology>
    </subcellularLocation>
</comment>
<comment type="similarity">
    <text evidence="3">Belongs to the Casparian strip membrane proteins (CASP) family.</text>
</comment>
<protein>
    <recommendedName>
        <fullName>CASP-like protein 1E1</fullName>
        <shortName>OsCASPL1E1</shortName>
    </recommendedName>
</protein>
<reference key="1">
    <citation type="journal article" date="2005" name="PLoS Biol.">
        <title>The genomes of Oryza sativa: a history of duplications.</title>
        <authorList>
            <person name="Yu J."/>
            <person name="Wang J."/>
            <person name="Lin W."/>
            <person name="Li S."/>
            <person name="Li H."/>
            <person name="Zhou J."/>
            <person name="Ni P."/>
            <person name="Dong W."/>
            <person name="Hu S."/>
            <person name="Zeng C."/>
            <person name="Zhang J."/>
            <person name="Zhang Y."/>
            <person name="Li R."/>
            <person name="Xu Z."/>
            <person name="Li S."/>
            <person name="Li X."/>
            <person name="Zheng H."/>
            <person name="Cong L."/>
            <person name="Lin L."/>
            <person name="Yin J."/>
            <person name="Geng J."/>
            <person name="Li G."/>
            <person name="Shi J."/>
            <person name="Liu J."/>
            <person name="Lv H."/>
            <person name="Li J."/>
            <person name="Wang J."/>
            <person name="Deng Y."/>
            <person name="Ran L."/>
            <person name="Shi X."/>
            <person name="Wang X."/>
            <person name="Wu Q."/>
            <person name="Li C."/>
            <person name="Ren X."/>
            <person name="Wang J."/>
            <person name="Wang X."/>
            <person name="Li D."/>
            <person name="Liu D."/>
            <person name="Zhang X."/>
            <person name="Ji Z."/>
            <person name="Zhao W."/>
            <person name="Sun Y."/>
            <person name="Zhang Z."/>
            <person name="Bao J."/>
            <person name="Han Y."/>
            <person name="Dong L."/>
            <person name="Ji J."/>
            <person name="Chen P."/>
            <person name="Wu S."/>
            <person name="Liu J."/>
            <person name="Xiao Y."/>
            <person name="Bu D."/>
            <person name="Tan J."/>
            <person name="Yang L."/>
            <person name="Ye C."/>
            <person name="Zhang J."/>
            <person name="Xu J."/>
            <person name="Zhou Y."/>
            <person name="Yu Y."/>
            <person name="Zhang B."/>
            <person name="Zhuang S."/>
            <person name="Wei H."/>
            <person name="Liu B."/>
            <person name="Lei M."/>
            <person name="Yu H."/>
            <person name="Li Y."/>
            <person name="Xu H."/>
            <person name="Wei S."/>
            <person name="He X."/>
            <person name="Fang L."/>
            <person name="Zhang Z."/>
            <person name="Zhang Y."/>
            <person name="Huang X."/>
            <person name="Su Z."/>
            <person name="Tong W."/>
            <person name="Li J."/>
            <person name="Tong Z."/>
            <person name="Li S."/>
            <person name="Ye J."/>
            <person name="Wang L."/>
            <person name="Fang L."/>
            <person name="Lei T."/>
            <person name="Chen C.-S."/>
            <person name="Chen H.-C."/>
            <person name="Xu Z."/>
            <person name="Li H."/>
            <person name="Huang H."/>
            <person name="Zhang F."/>
            <person name="Xu H."/>
            <person name="Li N."/>
            <person name="Zhao C."/>
            <person name="Li S."/>
            <person name="Dong L."/>
            <person name="Huang Y."/>
            <person name="Li L."/>
            <person name="Xi Y."/>
            <person name="Qi Q."/>
            <person name="Li W."/>
            <person name="Zhang B."/>
            <person name="Hu W."/>
            <person name="Zhang Y."/>
            <person name="Tian X."/>
            <person name="Jiao Y."/>
            <person name="Liang X."/>
            <person name="Jin J."/>
            <person name="Gao L."/>
            <person name="Zheng W."/>
            <person name="Hao B."/>
            <person name="Liu S.-M."/>
            <person name="Wang W."/>
            <person name="Yuan L."/>
            <person name="Cao M."/>
            <person name="McDermott J."/>
            <person name="Samudrala R."/>
            <person name="Wang J."/>
            <person name="Wong G.K.-S."/>
            <person name="Yang H."/>
        </authorList>
    </citation>
    <scope>NUCLEOTIDE SEQUENCE [LARGE SCALE GENOMIC DNA]</scope>
    <source>
        <strain>cv. 93-11</strain>
    </source>
</reference>
<reference key="2">
    <citation type="journal article" date="2007" name="Plant Mol. Biol.">
        <title>A collection of 10,096 indica rice full-length cDNAs reveals highly expressed sequence divergence between Oryza sativa indica and japonica subspecies.</title>
        <authorList>
            <person name="Liu X."/>
            <person name="Lu T."/>
            <person name="Yu S."/>
            <person name="Li Y."/>
            <person name="Huang Y."/>
            <person name="Huang T."/>
            <person name="Zhang L."/>
            <person name="Zhu J."/>
            <person name="Zhao Q."/>
            <person name="Fan D."/>
            <person name="Mu J."/>
            <person name="Shangguan Y."/>
            <person name="Feng Q."/>
            <person name="Guan J."/>
            <person name="Ying K."/>
            <person name="Zhang Y."/>
            <person name="Lin Z."/>
            <person name="Sun Z."/>
            <person name="Qian Q."/>
            <person name="Lu Y."/>
            <person name="Han B."/>
        </authorList>
    </citation>
    <scope>NUCLEOTIDE SEQUENCE [LARGE SCALE MRNA]</scope>
    <source>
        <strain>cv. Guang-Lu-Ai No.4</strain>
    </source>
</reference>
<reference key="3">
    <citation type="journal article" date="2014" name="Plant Physiol.">
        <title>Functional and evolutionary analysis of the CASPARIAN STRIP MEMBRANE DOMAIN PROTEIN family.</title>
        <authorList>
            <person name="Roppolo D."/>
            <person name="Boeckmann B."/>
            <person name="Pfister A."/>
            <person name="Boutet E."/>
            <person name="Rubio M.C."/>
            <person name="Denervaud-Tendon V."/>
            <person name="Vermeer J.E."/>
            <person name="Gheyselinck J."/>
            <person name="Xenarios I."/>
            <person name="Geldner N."/>
        </authorList>
    </citation>
    <scope>GENE FAMILY</scope>
    <scope>NOMENCLATURE</scope>
</reference>
<organism>
    <name type="scientific">Oryza sativa subsp. indica</name>
    <name type="common">Rice</name>
    <dbReference type="NCBI Taxonomy" id="39946"/>
    <lineage>
        <taxon>Eukaryota</taxon>
        <taxon>Viridiplantae</taxon>
        <taxon>Streptophyta</taxon>
        <taxon>Embryophyta</taxon>
        <taxon>Tracheophyta</taxon>
        <taxon>Spermatophyta</taxon>
        <taxon>Magnoliopsida</taxon>
        <taxon>Liliopsida</taxon>
        <taxon>Poales</taxon>
        <taxon>Poaceae</taxon>
        <taxon>BOP clade</taxon>
        <taxon>Oryzoideae</taxon>
        <taxon>Oryzeae</taxon>
        <taxon>Oryzinae</taxon>
        <taxon>Oryza</taxon>
        <taxon>Oryza sativa</taxon>
    </lineage>
</organism>
<gene>
    <name type="ORF">OsI_01913</name>
</gene>